<name>DF254_ARATH</name>
<accession>Q2V318</accession>
<feature type="signal peptide" evidence="2">
    <location>
        <begin position="1"/>
        <end position="20"/>
    </location>
</feature>
<feature type="chain" id="PRO_0000379717" description="Putative defensin-like protein 254">
    <location>
        <begin position="21"/>
        <end position="89"/>
    </location>
</feature>
<feature type="disulfide bond" evidence="1">
    <location>
        <begin position="31"/>
        <end position="48"/>
    </location>
</feature>
<feature type="disulfide bond" evidence="1">
    <location>
        <begin position="37"/>
        <end position="55"/>
    </location>
</feature>
<protein>
    <recommendedName>
        <fullName>Putative defensin-like protein 254</fullName>
    </recommendedName>
</protein>
<sequence>MHNISFKLLLLCDLFLSSSSVRHNLAVGDVCATNEECRINCQCDAAYCDLSCNMCVYMLHVMDTIDANIPNQPCISEYQNCGKKTSSLQ</sequence>
<proteinExistence type="uncertain"/>
<organism>
    <name type="scientific">Arabidopsis thaliana</name>
    <name type="common">Mouse-ear cress</name>
    <dbReference type="NCBI Taxonomy" id="3702"/>
    <lineage>
        <taxon>Eukaryota</taxon>
        <taxon>Viridiplantae</taxon>
        <taxon>Streptophyta</taxon>
        <taxon>Embryophyta</taxon>
        <taxon>Tracheophyta</taxon>
        <taxon>Spermatophyta</taxon>
        <taxon>Magnoliopsida</taxon>
        <taxon>eudicotyledons</taxon>
        <taxon>Gunneridae</taxon>
        <taxon>Pentapetalae</taxon>
        <taxon>rosids</taxon>
        <taxon>malvids</taxon>
        <taxon>Brassicales</taxon>
        <taxon>Brassicaceae</taxon>
        <taxon>Camelineae</taxon>
        <taxon>Arabidopsis</taxon>
    </lineage>
</organism>
<comment type="subcellular location">
    <subcellularLocation>
        <location evidence="1">Secreted</location>
    </subcellularLocation>
</comment>
<comment type="similarity">
    <text evidence="3">Belongs to the DEFL family.</text>
</comment>
<comment type="caution">
    <text evidence="3">Could be the product of a pseudogene. Lacks 2 of the 4 disulfide bonds, which are conserved features of the family.</text>
</comment>
<gene>
    <name type="ordered locus">At5g43401</name>
    <name type="ORF">MWF20</name>
</gene>
<keyword id="KW-0929">Antimicrobial</keyword>
<keyword id="KW-1015">Disulfide bond</keyword>
<keyword id="KW-0295">Fungicide</keyword>
<keyword id="KW-0611">Plant defense</keyword>
<keyword id="KW-1185">Reference proteome</keyword>
<keyword id="KW-0964">Secreted</keyword>
<keyword id="KW-0732">Signal</keyword>
<evidence type="ECO:0000250" key="1"/>
<evidence type="ECO:0000255" key="2"/>
<evidence type="ECO:0000305" key="3"/>
<reference key="1">
    <citation type="journal article" date="2000" name="DNA Res.">
        <title>Structural analysis of Arabidopsis thaliana chromosome 5. X. Sequence features of the regions of 3,076,755 bp covered by sixty P1 and TAC clones.</title>
        <authorList>
            <person name="Sato S."/>
            <person name="Nakamura Y."/>
            <person name="Kaneko T."/>
            <person name="Katoh T."/>
            <person name="Asamizu E."/>
            <person name="Kotani H."/>
            <person name="Tabata S."/>
        </authorList>
    </citation>
    <scope>NUCLEOTIDE SEQUENCE [LARGE SCALE GENOMIC DNA]</scope>
    <source>
        <strain>cv. Columbia</strain>
    </source>
</reference>
<reference key="2">
    <citation type="journal article" date="2017" name="Plant J.">
        <title>Araport11: a complete reannotation of the Arabidopsis thaliana reference genome.</title>
        <authorList>
            <person name="Cheng C.Y."/>
            <person name="Krishnakumar V."/>
            <person name="Chan A.P."/>
            <person name="Thibaud-Nissen F."/>
            <person name="Schobel S."/>
            <person name="Town C.D."/>
        </authorList>
    </citation>
    <scope>GENOME REANNOTATION</scope>
    <source>
        <strain>cv. Columbia</strain>
    </source>
</reference>
<reference key="3">
    <citation type="journal article" date="2005" name="Plant Physiol.">
        <title>Genome organization of more than 300 defensin-like genes in Arabidopsis.</title>
        <authorList>
            <person name="Silverstein K.A.T."/>
            <person name="Graham M.A."/>
            <person name="Paape T.D."/>
            <person name="VandenBosch K.A."/>
        </authorList>
    </citation>
    <scope>GENE FAMILY</scope>
</reference>
<dbReference type="EMBL" id="AB025638">
    <property type="status" value="NOT_ANNOTATED_CDS"/>
    <property type="molecule type" value="Genomic_DNA"/>
</dbReference>
<dbReference type="EMBL" id="CP002688">
    <property type="protein sequence ID" value="AED94957.1"/>
    <property type="molecule type" value="Genomic_DNA"/>
</dbReference>
<dbReference type="RefSeq" id="NP_001032001.1">
    <property type="nucleotide sequence ID" value="NM_001036924.1"/>
</dbReference>
<dbReference type="PaxDb" id="3702-AT5G43401.1"/>
<dbReference type="EnsemblPlants" id="AT5G43401.1">
    <property type="protein sequence ID" value="AT5G43401.1"/>
    <property type="gene ID" value="AT5G43401"/>
</dbReference>
<dbReference type="GeneID" id="3771414"/>
<dbReference type="Gramene" id="AT5G43401.1">
    <property type="protein sequence ID" value="AT5G43401.1"/>
    <property type="gene ID" value="AT5G43401"/>
</dbReference>
<dbReference type="KEGG" id="ath:AT5G43401"/>
<dbReference type="Araport" id="AT5G43401"/>
<dbReference type="TAIR" id="AT5G43401"/>
<dbReference type="HOGENOM" id="CLU_2430079_0_0_1"/>
<dbReference type="InParanoid" id="Q2V318"/>
<dbReference type="OMA" id="CQCDAAY"/>
<dbReference type="PhylomeDB" id="Q2V318"/>
<dbReference type="Proteomes" id="UP000006548">
    <property type="component" value="Chromosome 5"/>
</dbReference>
<dbReference type="GO" id="GO:0005576">
    <property type="term" value="C:extracellular region"/>
    <property type="evidence" value="ECO:0007669"/>
    <property type="project" value="UniProtKB-SubCell"/>
</dbReference>
<dbReference type="GO" id="GO:0050832">
    <property type="term" value="P:defense response to fungus"/>
    <property type="evidence" value="ECO:0007669"/>
    <property type="project" value="UniProtKB-KW"/>
</dbReference>
<dbReference type="GO" id="GO:0031640">
    <property type="term" value="P:killing of cells of another organism"/>
    <property type="evidence" value="ECO:0007669"/>
    <property type="project" value="UniProtKB-KW"/>
</dbReference>